<proteinExistence type="inferred from homology"/>
<name>HIS1_EDWI9</name>
<evidence type="ECO:0000255" key="1">
    <source>
        <dbReference type="HAMAP-Rule" id="MF_00079"/>
    </source>
</evidence>
<accession>C5BG10</accession>
<keyword id="KW-0028">Amino-acid biosynthesis</keyword>
<keyword id="KW-0067">ATP-binding</keyword>
<keyword id="KW-0963">Cytoplasm</keyword>
<keyword id="KW-0328">Glycosyltransferase</keyword>
<keyword id="KW-0368">Histidine biosynthesis</keyword>
<keyword id="KW-0460">Magnesium</keyword>
<keyword id="KW-0479">Metal-binding</keyword>
<keyword id="KW-0547">Nucleotide-binding</keyword>
<keyword id="KW-0808">Transferase</keyword>
<organism>
    <name type="scientific">Edwardsiella ictaluri (strain 93-146)</name>
    <dbReference type="NCBI Taxonomy" id="634503"/>
    <lineage>
        <taxon>Bacteria</taxon>
        <taxon>Pseudomonadati</taxon>
        <taxon>Pseudomonadota</taxon>
        <taxon>Gammaproteobacteria</taxon>
        <taxon>Enterobacterales</taxon>
        <taxon>Hafniaceae</taxon>
        <taxon>Edwardsiella</taxon>
    </lineage>
</organism>
<comment type="function">
    <text evidence="1">Catalyzes the condensation of ATP and 5-phosphoribose 1-diphosphate to form N'-(5'-phosphoribosyl)-ATP (PR-ATP). Has a crucial role in the pathway because the rate of histidine biosynthesis seems to be controlled primarily by regulation of HisG enzymatic activity.</text>
</comment>
<comment type="catalytic activity">
    <reaction evidence="1">
        <text>1-(5-phospho-beta-D-ribosyl)-ATP + diphosphate = 5-phospho-alpha-D-ribose 1-diphosphate + ATP</text>
        <dbReference type="Rhea" id="RHEA:18473"/>
        <dbReference type="ChEBI" id="CHEBI:30616"/>
        <dbReference type="ChEBI" id="CHEBI:33019"/>
        <dbReference type="ChEBI" id="CHEBI:58017"/>
        <dbReference type="ChEBI" id="CHEBI:73183"/>
        <dbReference type="EC" id="2.4.2.17"/>
    </reaction>
</comment>
<comment type="cofactor">
    <cofactor evidence="1">
        <name>Mg(2+)</name>
        <dbReference type="ChEBI" id="CHEBI:18420"/>
    </cofactor>
</comment>
<comment type="activity regulation">
    <text evidence="1">Feedback inhibited by histidine.</text>
</comment>
<comment type="pathway">
    <text evidence="1">Amino-acid biosynthesis; L-histidine biosynthesis; L-histidine from 5-phospho-alpha-D-ribose 1-diphosphate: step 1/9.</text>
</comment>
<comment type="subunit">
    <text evidence="1">Equilibrium between an active dimeric form, an inactive hexameric form and higher aggregates. Interconversion between the various forms is largely reversible and is influenced by the natural substrates and inhibitors of the enzyme.</text>
</comment>
<comment type="subcellular location">
    <subcellularLocation>
        <location evidence="1">Cytoplasm</location>
    </subcellularLocation>
</comment>
<comment type="similarity">
    <text evidence="1">Belongs to the ATP phosphoribosyltransferase family. Long subfamily.</text>
</comment>
<reference key="1">
    <citation type="submission" date="2009-03" db="EMBL/GenBank/DDBJ databases">
        <title>Complete genome sequence of Edwardsiella ictaluri 93-146.</title>
        <authorList>
            <person name="Williams M.L."/>
            <person name="Gillaspy A.F."/>
            <person name="Dyer D.W."/>
            <person name="Thune R.L."/>
            <person name="Waldbieser G.C."/>
            <person name="Schuster S.C."/>
            <person name="Gipson J."/>
            <person name="Zaitshik J."/>
            <person name="Landry C."/>
            <person name="Lawrence M.L."/>
        </authorList>
    </citation>
    <scope>NUCLEOTIDE SEQUENCE [LARGE SCALE GENOMIC DNA]</scope>
    <source>
        <strain>93-146</strain>
    </source>
</reference>
<feature type="chain" id="PRO_1000202532" description="ATP phosphoribosyltransferase">
    <location>
        <begin position="1"/>
        <end position="299"/>
    </location>
</feature>
<sequence>MLDKTRLRIAMQKSGRLSEDSQALLARCGIKINLHQQRLIAFAENMPIDILRVRDDDIPGLVMDGVVDLGIIGENVLEEELLTRRAQGDDPRYTLLRRLDFGACRLSLAMPIDAAYDGARGLQDCRIATSYPHLLKRYLDGQGVRFKSCLLNGSVEVAPRAGLADAICDLVSTGATLEANGLREVEVIYRSKACLIQRDGEMPPAKQALIERLMTRIQGVIQARESKYIMLHAPSDRLEEIMALLPGAERPTLLPLAGDKRRVAMHMVSSETLFWETMEQLKALGASSILVLPIEKMME</sequence>
<protein>
    <recommendedName>
        <fullName evidence="1">ATP phosphoribosyltransferase</fullName>
        <shortName evidence="1">ATP-PRT</shortName>
        <shortName evidence="1">ATP-PRTase</shortName>
        <ecNumber evidence="1">2.4.2.17</ecNumber>
    </recommendedName>
</protein>
<gene>
    <name evidence="1" type="primary">hisG</name>
    <name type="ordered locus">NT01EI_2564</name>
</gene>
<dbReference type="EC" id="2.4.2.17" evidence="1"/>
<dbReference type="EMBL" id="CP001600">
    <property type="protein sequence ID" value="ACR69733.1"/>
    <property type="molecule type" value="Genomic_DNA"/>
</dbReference>
<dbReference type="RefSeq" id="WP_015871843.1">
    <property type="nucleotide sequence ID" value="NZ_CP169062.1"/>
</dbReference>
<dbReference type="SMR" id="C5BG10"/>
<dbReference type="STRING" id="67780.B6E78_04880"/>
<dbReference type="GeneID" id="69539468"/>
<dbReference type="KEGG" id="eic:NT01EI_2564"/>
<dbReference type="PATRIC" id="fig|634503.3.peg.2282"/>
<dbReference type="HOGENOM" id="CLU_038115_1_0_6"/>
<dbReference type="OrthoDB" id="9801867at2"/>
<dbReference type="UniPathway" id="UPA00031">
    <property type="reaction ID" value="UER00006"/>
</dbReference>
<dbReference type="Proteomes" id="UP000001485">
    <property type="component" value="Chromosome"/>
</dbReference>
<dbReference type="GO" id="GO:0005737">
    <property type="term" value="C:cytoplasm"/>
    <property type="evidence" value="ECO:0007669"/>
    <property type="project" value="UniProtKB-SubCell"/>
</dbReference>
<dbReference type="GO" id="GO:0005524">
    <property type="term" value="F:ATP binding"/>
    <property type="evidence" value="ECO:0007669"/>
    <property type="project" value="UniProtKB-KW"/>
</dbReference>
<dbReference type="GO" id="GO:0003879">
    <property type="term" value="F:ATP phosphoribosyltransferase activity"/>
    <property type="evidence" value="ECO:0007669"/>
    <property type="project" value="UniProtKB-UniRule"/>
</dbReference>
<dbReference type="GO" id="GO:0000287">
    <property type="term" value="F:magnesium ion binding"/>
    <property type="evidence" value="ECO:0007669"/>
    <property type="project" value="UniProtKB-UniRule"/>
</dbReference>
<dbReference type="GO" id="GO:0000105">
    <property type="term" value="P:L-histidine biosynthetic process"/>
    <property type="evidence" value="ECO:0007669"/>
    <property type="project" value="UniProtKB-UniRule"/>
</dbReference>
<dbReference type="CDD" id="cd13592">
    <property type="entry name" value="PBP2_HisGL2"/>
    <property type="match status" value="1"/>
</dbReference>
<dbReference type="FunFam" id="3.30.70.120:FF:000002">
    <property type="entry name" value="ATP phosphoribosyltransferase"/>
    <property type="match status" value="1"/>
</dbReference>
<dbReference type="FunFam" id="3.40.190.10:FF:000008">
    <property type="entry name" value="ATP phosphoribosyltransferase"/>
    <property type="match status" value="1"/>
</dbReference>
<dbReference type="Gene3D" id="3.30.70.120">
    <property type="match status" value="1"/>
</dbReference>
<dbReference type="Gene3D" id="3.40.190.10">
    <property type="entry name" value="Periplasmic binding protein-like II"/>
    <property type="match status" value="2"/>
</dbReference>
<dbReference type="HAMAP" id="MF_00079">
    <property type="entry name" value="HisG_Long"/>
    <property type="match status" value="1"/>
</dbReference>
<dbReference type="InterPro" id="IPR020621">
    <property type="entry name" value="ATP-PRT_HisG_long"/>
</dbReference>
<dbReference type="InterPro" id="IPR013820">
    <property type="entry name" value="ATP_PRibTrfase_cat"/>
</dbReference>
<dbReference type="InterPro" id="IPR018198">
    <property type="entry name" value="ATP_PRibTrfase_CS"/>
</dbReference>
<dbReference type="InterPro" id="IPR001348">
    <property type="entry name" value="ATP_PRibTrfase_HisG"/>
</dbReference>
<dbReference type="InterPro" id="IPR013115">
    <property type="entry name" value="HisG_C"/>
</dbReference>
<dbReference type="InterPro" id="IPR011322">
    <property type="entry name" value="N-reg_PII-like_a/b"/>
</dbReference>
<dbReference type="InterPro" id="IPR015867">
    <property type="entry name" value="N-reg_PII/ATP_PRibTrfase_C"/>
</dbReference>
<dbReference type="NCBIfam" id="TIGR00070">
    <property type="entry name" value="hisG"/>
    <property type="match status" value="1"/>
</dbReference>
<dbReference type="NCBIfam" id="TIGR03455">
    <property type="entry name" value="HisG_C-term"/>
    <property type="match status" value="1"/>
</dbReference>
<dbReference type="PANTHER" id="PTHR21403:SF8">
    <property type="entry name" value="ATP PHOSPHORIBOSYLTRANSFERASE"/>
    <property type="match status" value="1"/>
</dbReference>
<dbReference type="PANTHER" id="PTHR21403">
    <property type="entry name" value="ATP PHOSPHORIBOSYLTRANSFERASE ATP-PRTASE"/>
    <property type="match status" value="1"/>
</dbReference>
<dbReference type="Pfam" id="PF01634">
    <property type="entry name" value="HisG"/>
    <property type="match status" value="1"/>
</dbReference>
<dbReference type="Pfam" id="PF08029">
    <property type="entry name" value="HisG_C"/>
    <property type="match status" value="1"/>
</dbReference>
<dbReference type="SUPFAM" id="SSF54913">
    <property type="entry name" value="GlnB-like"/>
    <property type="match status" value="1"/>
</dbReference>
<dbReference type="SUPFAM" id="SSF53850">
    <property type="entry name" value="Periplasmic binding protein-like II"/>
    <property type="match status" value="1"/>
</dbReference>
<dbReference type="PROSITE" id="PS01316">
    <property type="entry name" value="ATP_P_PHORIBOSYLTR"/>
    <property type="match status" value="1"/>
</dbReference>